<sequence>MPSVVGNLVVQNSNGSFNLGDFYNVSPKENTKAYNGSGASNVGFVVNTFNGVSATNTFDSDVADQDQIGTA</sequence>
<accession>P62186</accession>
<accession>O68688</accession>
<accession>Q6I245</accession>
<accession>Q6KVY1</accession>
<keyword id="KW-0309">Germination</keyword>
<keyword id="KW-1185">Reference proteome</keyword>
<keyword id="KW-0749">Sporulation</keyword>
<reference key="1">
    <citation type="journal article" date="2003" name="Nature">
        <title>The genome sequence of Bacillus anthracis Ames and comparison to closely related bacteria.</title>
        <authorList>
            <person name="Read T.D."/>
            <person name="Peterson S.N."/>
            <person name="Tourasse N.J."/>
            <person name="Baillie L.W."/>
            <person name="Paulsen I.T."/>
            <person name="Nelson K.E."/>
            <person name="Tettelin H."/>
            <person name="Fouts D.E."/>
            <person name="Eisen J.A."/>
            <person name="Gill S.R."/>
            <person name="Holtzapple E.K."/>
            <person name="Okstad O.A."/>
            <person name="Helgason E."/>
            <person name="Rilstone J."/>
            <person name="Wu M."/>
            <person name="Kolonay J.F."/>
            <person name="Beanan M.J."/>
            <person name="Dodson R.J."/>
            <person name="Brinkac L.M."/>
            <person name="Gwinn M.L."/>
            <person name="DeBoy R.T."/>
            <person name="Madpu R."/>
            <person name="Daugherty S.C."/>
            <person name="Durkin A.S."/>
            <person name="Haft D.H."/>
            <person name="Nelson W.C."/>
            <person name="Peterson J.D."/>
            <person name="Pop M."/>
            <person name="Khouri H.M."/>
            <person name="Radune D."/>
            <person name="Benton J.L."/>
            <person name="Mahamoud Y."/>
            <person name="Jiang L."/>
            <person name="Hance I.R."/>
            <person name="Weidman J.F."/>
            <person name="Berry K.J."/>
            <person name="Plaut R.D."/>
            <person name="Wolf A.M."/>
            <person name="Watkins K.L."/>
            <person name="Nierman W.C."/>
            <person name="Hazen A."/>
            <person name="Cline R.T."/>
            <person name="Redmond C."/>
            <person name="Thwaite J.E."/>
            <person name="White O."/>
            <person name="Salzberg S.L."/>
            <person name="Thomason B."/>
            <person name="Friedlander A.M."/>
            <person name="Koehler T.M."/>
            <person name="Hanna P.C."/>
            <person name="Kolstoe A.-B."/>
            <person name="Fraser C.M."/>
        </authorList>
    </citation>
    <scope>NUCLEOTIDE SEQUENCE [LARGE SCALE GENOMIC DNA]</scope>
    <source>
        <strain>Ames / isolate Porton</strain>
    </source>
</reference>
<reference key="2">
    <citation type="journal article" date="2009" name="J. Bacteriol.">
        <title>The complete genome sequence of Bacillus anthracis Ames 'Ancestor'.</title>
        <authorList>
            <person name="Ravel J."/>
            <person name="Jiang L."/>
            <person name="Stanley S.T."/>
            <person name="Wilson M.R."/>
            <person name="Decker R.S."/>
            <person name="Read T.D."/>
            <person name="Worsham P."/>
            <person name="Keim P.S."/>
            <person name="Salzberg S.L."/>
            <person name="Fraser-Liggett C.M."/>
            <person name="Rasko D.A."/>
        </authorList>
    </citation>
    <scope>NUCLEOTIDE SEQUENCE [LARGE SCALE GENOMIC DNA]</scope>
    <source>
        <strain>Ames ancestor</strain>
    </source>
</reference>
<reference key="3">
    <citation type="submission" date="2004-01" db="EMBL/GenBank/DDBJ databases">
        <title>Complete genome sequence of Bacillus anthracis Sterne.</title>
        <authorList>
            <person name="Brettin T.S."/>
            <person name="Bruce D."/>
            <person name="Challacombe J.F."/>
            <person name="Gilna P."/>
            <person name="Han C."/>
            <person name="Hill K."/>
            <person name="Hitchcock P."/>
            <person name="Jackson P."/>
            <person name="Keim P."/>
            <person name="Longmire J."/>
            <person name="Lucas S."/>
            <person name="Okinaka R."/>
            <person name="Richardson P."/>
            <person name="Rubin E."/>
            <person name="Tice H."/>
        </authorList>
    </citation>
    <scope>NUCLEOTIDE SEQUENCE [LARGE SCALE GENOMIC DNA]</scope>
    <source>
        <strain>Sterne</strain>
    </source>
</reference>
<organism>
    <name type="scientific">Bacillus anthracis</name>
    <dbReference type="NCBI Taxonomy" id="1392"/>
    <lineage>
        <taxon>Bacteria</taxon>
        <taxon>Bacillati</taxon>
        <taxon>Bacillota</taxon>
        <taxon>Bacilli</taxon>
        <taxon>Bacillales</taxon>
        <taxon>Bacillaceae</taxon>
        <taxon>Bacillus</taxon>
        <taxon>Bacillus cereus group</taxon>
    </lineage>
</organism>
<evidence type="ECO:0000305" key="1"/>
<name>GERPF_BACAN</name>
<protein>
    <recommendedName>
        <fullName>Probable spore germination protein GerPF</fullName>
    </recommendedName>
</protein>
<gene>
    <name type="primary">gerPF</name>
    <name type="synonym">gerPF-1</name>
    <name type="ordered locus">BA_1144</name>
    <name type="ordered locus">GBAA_1144</name>
    <name type="ordered locus">BAS1063</name>
</gene>
<proteinExistence type="inferred from homology"/>
<dbReference type="EMBL" id="AE016879">
    <property type="protein sequence ID" value="AAP25114.1"/>
    <property type="molecule type" value="Genomic_DNA"/>
</dbReference>
<dbReference type="EMBL" id="AE017334">
    <property type="protein sequence ID" value="AAT30237.1"/>
    <property type="molecule type" value="Genomic_DNA"/>
</dbReference>
<dbReference type="EMBL" id="AE017225">
    <property type="protein sequence ID" value="AAT53386.1"/>
    <property type="molecule type" value="Genomic_DNA"/>
</dbReference>
<dbReference type="RefSeq" id="NP_843628.1">
    <property type="nucleotide sequence ID" value="NC_003997.3"/>
</dbReference>
<dbReference type="RefSeq" id="WP_001141566.1">
    <property type="nucleotide sequence ID" value="NZ_WXXJ01000044.1"/>
</dbReference>
<dbReference type="RefSeq" id="YP_027335.1">
    <property type="nucleotide sequence ID" value="NC_005945.1"/>
</dbReference>
<dbReference type="STRING" id="261594.GBAA_1144"/>
<dbReference type="DNASU" id="1089136"/>
<dbReference type="GeneID" id="93009899"/>
<dbReference type="KEGG" id="ban:BA_1144"/>
<dbReference type="KEGG" id="bar:GBAA_1144"/>
<dbReference type="KEGG" id="bat:BAS1063"/>
<dbReference type="PATRIC" id="fig|198094.11.peg.1125"/>
<dbReference type="HOGENOM" id="CLU_173188_2_1_9"/>
<dbReference type="OMA" id="MPIVINH"/>
<dbReference type="OrthoDB" id="2476480at2"/>
<dbReference type="Proteomes" id="UP000000427">
    <property type="component" value="Chromosome"/>
</dbReference>
<dbReference type="Proteomes" id="UP000000594">
    <property type="component" value="Chromosome"/>
</dbReference>
<dbReference type="GO" id="GO:0030436">
    <property type="term" value="P:asexual sporulation"/>
    <property type="evidence" value="ECO:0000304"/>
    <property type="project" value="TIGR"/>
</dbReference>
<dbReference type="GO" id="GO:0009847">
    <property type="term" value="P:spore germination"/>
    <property type="evidence" value="ECO:0000304"/>
    <property type="project" value="TIGR"/>
</dbReference>
<dbReference type="GO" id="GO:0030435">
    <property type="term" value="P:sporulation resulting in formation of a cellular spore"/>
    <property type="evidence" value="ECO:0007669"/>
    <property type="project" value="UniProtKB-KW"/>
</dbReference>
<dbReference type="InterPro" id="IPR019618">
    <property type="entry name" value="Spore_germination_GerPA"/>
</dbReference>
<dbReference type="PANTHER" id="PTHR37808:SF1">
    <property type="entry name" value="SPORE GERMINATION PROTEIN-LIKE PROTEIN YDZR"/>
    <property type="match status" value="1"/>
</dbReference>
<dbReference type="PANTHER" id="PTHR37808">
    <property type="entry name" value="SPORE GERMINATION PROTEIN-LIKE PROTEIN YDZR-RELATED"/>
    <property type="match status" value="1"/>
</dbReference>
<dbReference type="Pfam" id="PF10676">
    <property type="entry name" value="gerPA"/>
    <property type="match status" value="1"/>
</dbReference>
<feature type="chain" id="PRO_0000105874" description="Probable spore germination protein GerPF">
    <location>
        <begin position="1"/>
        <end position="71"/>
    </location>
</feature>
<comment type="function">
    <text>Required for the formation of functionally normal spores. Could be involved in the establishment of normal spore coat structure and/or permeability, which allows the access of germinants to their receptor.</text>
</comment>
<comment type="similarity">
    <text evidence="1">Belongs to the GerPA/GerPF family.</text>
</comment>